<feature type="chain" id="PRO_1000202815" description="4-hydroxy-tetrahydrodipicolinate reductase">
    <location>
        <begin position="1"/>
        <end position="273"/>
    </location>
</feature>
<feature type="active site" description="Proton donor/acceptor" evidence="1">
    <location>
        <position position="159"/>
    </location>
</feature>
<feature type="active site" description="Proton donor" evidence="1">
    <location>
        <position position="163"/>
    </location>
</feature>
<feature type="binding site" evidence="1">
    <location>
        <begin position="12"/>
        <end position="17"/>
    </location>
    <ligand>
        <name>NAD(+)</name>
        <dbReference type="ChEBI" id="CHEBI:57540"/>
    </ligand>
</feature>
<feature type="binding site" evidence="1">
    <location>
        <position position="38"/>
    </location>
    <ligand>
        <name>NAD(+)</name>
        <dbReference type="ChEBI" id="CHEBI:57540"/>
    </ligand>
</feature>
<feature type="binding site" evidence="1">
    <location>
        <position position="39"/>
    </location>
    <ligand>
        <name>NADP(+)</name>
        <dbReference type="ChEBI" id="CHEBI:58349"/>
    </ligand>
</feature>
<feature type="binding site" evidence="1">
    <location>
        <begin position="102"/>
        <end position="104"/>
    </location>
    <ligand>
        <name>NAD(+)</name>
        <dbReference type="ChEBI" id="CHEBI:57540"/>
    </ligand>
</feature>
<feature type="binding site" evidence="1">
    <location>
        <begin position="126"/>
        <end position="129"/>
    </location>
    <ligand>
        <name>NAD(+)</name>
        <dbReference type="ChEBI" id="CHEBI:57540"/>
    </ligand>
</feature>
<feature type="binding site" evidence="1">
    <location>
        <position position="160"/>
    </location>
    <ligand>
        <name>(S)-2,3,4,5-tetrahydrodipicolinate</name>
        <dbReference type="ChEBI" id="CHEBI:16845"/>
    </ligand>
</feature>
<feature type="binding site" evidence="1">
    <location>
        <begin position="169"/>
        <end position="170"/>
    </location>
    <ligand>
        <name>(S)-2,3,4,5-tetrahydrodipicolinate</name>
        <dbReference type="ChEBI" id="CHEBI:16845"/>
    </ligand>
</feature>
<dbReference type="EC" id="1.17.1.8" evidence="1"/>
<dbReference type="EMBL" id="CP001657">
    <property type="protein sequence ID" value="ACT14664.1"/>
    <property type="molecule type" value="Genomic_DNA"/>
</dbReference>
<dbReference type="RefSeq" id="WP_015841780.1">
    <property type="nucleotide sequence ID" value="NC_012917.1"/>
</dbReference>
<dbReference type="SMR" id="C6DF00"/>
<dbReference type="STRING" id="561230.PC1_3649"/>
<dbReference type="KEGG" id="pct:PC1_3649"/>
<dbReference type="eggNOG" id="COG0289">
    <property type="taxonomic scope" value="Bacteria"/>
</dbReference>
<dbReference type="HOGENOM" id="CLU_047479_2_1_6"/>
<dbReference type="OrthoDB" id="9790352at2"/>
<dbReference type="UniPathway" id="UPA00034">
    <property type="reaction ID" value="UER00018"/>
</dbReference>
<dbReference type="Proteomes" id="UP000002736">
    <property type="component" value="Chromosome"/>
</dbReference>
<dbReference type="GO" id="GO:0005829">
    <property type="term" value="C:cytosol"/>
    <property type="evidence" value="ECO:0007669"/>
    <property type="project" value="TreeGrafter"/>
</dbReference>
<dbReference type="GO" id="GO:0008839">
    <property type="term" value="F:4-hydroxy-tetrahydrodipicolinate reductase"/>
    <property type="evidence" value="ECO:0007669"/>
    <property type="project" value="UniProtKB-EC"/>
</dbReference>
<dbReference type="GO" id="GO:0051287">
    <property type="term" value="F:NAD binding"/>
    <property type="evidence" value="ECO:0007669"/>
    <property type="project" value="UniProtKB-UniRule"/>
</dbReference>
<dbReference type="GO" id="GO:0050661">
    <property type="term" value="F:NADP binding"/>
    <property type="evidence" value="ECO:0007669"/>
    <property type="project" value="UniProtKB-UniRule"/>
</dbReference>
<dbReference type="GO" id="GO:0016726">
    <property type="term" value="F:oxidoreductase activity, acting on CH or CH2 groups, NAD or NADP as acceptor"/>
    <property type="evidence" value="ECO:0007669"/>
    <property type="project" value="UniProtKB-UniRule"/>
</dbReference>
<dbReference type="GO" id="GO:0019877">
    <property type="term" value="P:diaminopimelate biosynthetic process"/>
    <property type="evidence" value="ECO:0007669"/>
    <property type="project" value="UniProtKB-UniRule"/>
</dbReference>
<dbReference type="GO" id="GO:0009089">
    <property type="term" value="P:lysine biosynthetic process via diaminopimelate"/>
    <property type="evidence" value="ECO:0007669"/>
    <property type="project" value="UniProtKB-UniRule"/>
</dbReference>
<dbReference type="CDD" id="cd02274">
    <property type="entry name" value="DHDPR_N"/>
    <property type="match status" value="1"/>
</dbReference>
<dbReference type="FunFam" id="3.30.360.10:FF:000004">
    <property type="entry name" value="4-hydroxy-tetrahydrodipicolinate reductase"/>
    <property type="match status" value="1"/>
</dbReference>
<dbReference type="FunFam" id="3.40.50.720:FF:000048">
    <property type="entry name" value="4-hydroxy-tetrahydrodipicolinate reductase"/>
    <property type="match status" value="1"/>
</dbReference>
<dbReference type="Gene3D" id="3.30.360.10">
    <property type="entry name" value="Dihydrodipicolinate Reductase, domain 2"/>
    <property type="match status" value="1"/>
</dbReference>
<dbReference type="Gene3D" id="3.40.50.720">
    <property type="entry name" value="NAD(P)-binding Rossmann-like Domain"/>
    <property type="match status" value="1"/>
</dbReference>
<dbReference type="HAMAP" id="MF_00102">
    <property type="entry name" value="DapB"/>
    <property type="match status" value="1"/>
</dbReference>
<dbReference type="InterPro" id="IPR022663">
    <property type="entry name" value="DapB_C"/>
</dbReference>
<dbReference type="InterPro" id="IPR000846">
    <property type="entry name" value="DapB_N"/>
</dbReference>
<dbReference type="InterPro" id="IPR022664">
    <property type="entry name" value="DapB_N_CS"/>
</dbReference>
<dbReference type="InterPro" id="IPR023940">
    <property type="entry name" value="DHDPR_bac"/>
</dbReference>
<dbReference type="InterPro" id="IPR036291">
    <property type="entry name" value="NAD(P)-bd_dom_sf"/>
</dbReference>
<dbReference type="NCBIfam" id="TIGR00036">
    <property type="entry name" value="dapB"/>
    <property type="match status" value="1"/>
</dbReference>
<dbReference type="PANTHER" id="PTHR20836:SF0">
    <property type="entry name" value="4-HYDROXY-TETRAHYDRODIPICOLINATE REDUCTASE 1, CHLOROPLASTIC-RELATED"/>
    <property type="match status" value="1"/>
</dbReference>
<dbReference type="PANTHER" id="PTHR20836">
    <property type="entry name" value="DIHYDRODIPICOLINATE REDUCTASE"/>
    <property type="match status" value="1"/>
</dbReference>
<dbReference type="Pfam" id="PF05173">
    <property type="entry name" value="DapB_C"/>
    <property type="match status" value="1"/>
</dbReference>
<dbReference type="Pfam" id="PF01113">
    <property type="entry name" value="DapB_N"/>
    <property type="match status" value="1"/>
</dbReference>
<dbReference type="PIRSF" id="PIRSF000161">
    <property type="entry name" value="DHPR"/>
    <property type="match status" value="1"/>
</dbReference>
<dbReference type="SUPFAM" id="SSF55347">
    <property type="entry name" value="Glyceraldehyde-3-phosphate dehydrogenase-like, C-terminal domain"/>
    <property type="match status" value="1"/>
</dbReference>
<dbReference type="SUPFAM" id="SSF51735">
    <property type="entry name" value="NAD(P)-binding Rossmann-fold domains"/>
    <property type="match status" value="1"/>
</dbReference>
<dbReference type="PROSITE" id="PS01298">
    <property type="entry name" value="DAPB"/>
    <property type="match status" value="1"/>
</dbReference>
<accession>C6DF00</accession>
<comment type="function">
    <text evidence="1">Catalyzes the conversion of 4-hydroxy-tetrahydrodipicolinate (HTPA) to tetrahydrodipicolinate.</text>
</comment>
<comment type="catalytic activity">
    <reaction evidence="1">
        <text>(S)-2,3,4,5-tetrahydrodipicolinate + NAD(+) + H2O = (2S,4S)-4-hydroxy-2,3,4,5-tetrahydrodipicolinate + NADH + H(+)</text>
        <dbReference type="Rhea" id="RHEA:35323"/>
        <dbReference type="ChEBI" id="CHEBI:15377"/>
        <dbReference type="ChEBI" id="CHEBI:15378"/>
        <dbReference type="ChEBI" id="CHEBI:16845"/>
        <dbReference type="ChEBI" id="CHEBI:57540"/>
        <dbReference type="ChEBI" id="CHEBI:57945"/>
        <dbReference type="ChEBI" id="CHEBI:67139"/>
        <dbReference type="EC" id="1.17.1.8"/>
    </reaction>
</comment>
<comment type="catalytic activity">
    <reaction evidence="1">
        <text>(S)-2,3,4,5-tetrahydrodipicolinate + NADP(+) + H2O = (2S,4S)-4-hydroxy-2,3,4,5-tetrahydrodipicolinate + NADPH + H(+)</text>
        <dbReference type="Rhea" id="RHEA:35331"/>
        <dbReference type="ChEBI" id="CHEBI:15377"/>
        <dbReference type="ChEBI" id="CHEBI:15378"/>
        <dbReference type="ChEBI" id="CHEBI:16845"/>
        <dbReference type="ChEBI" id="CHEBI:57783"/>
        <dbReference type="ChEBI" id="CHEBI:58349"/>
        <dbReference type="ChEBI" id="CHEBI:67139"/>
        <dbReference type="EC" id="1.17.1.8"/>
    </reaction>
</comment>
<comment type="pathway">
    <text evidence="1">Amino-acid biosynthesis; L-lysine biosynthesis via DAP pathway; (S)-tetrahydrodipicolinate from L-aspartate: step 4/4.</text>
</comment>
<comment type="subunit">
    <text evidence="1">Homotetramer.</text>
</comment>
<comment type="subcellular location">
    <subcellularLocation>
        <location evidence="1">Cytoplasm</location>
    </subcellularLocation>
</comment>
<comment type="similarity">
    <text evidence="1">Belongs to the DapB family.</text>
</comment>
<comment type="caution">
    <text evidence="2">Was originally thought to be a dihydrodipicolinate reductase (DHDPR), catalyzing the conversion of dihydrodipicolinate to tetrahydrodipicolinate. However, it was shown in E.coli that the substrate of the enzymatic reaction is not dihydrodipicolinate (DHDP) but in fact (2S,4S)-4-hydroxy-2,3,4,5-tetrahydrodipicolinic acid (HTPA), the product released by the DapA-catalyzed reaction.</text>
</comment>
<sequence>MKNSSIRIAVVGAGGRMGRQLIQAIEQMDGVVLGAALERSGSSLIGSDAGELAGLGKSGITVKESLNAVQNDFDILIDFTRPEGTLAHLAFCHQHRKGMIIGTTGFDDAGKAAIKQAAQDIGIVFAANFSVGVNVMLKLLEKAAKVMGDYTDIEIIEAHHRHKVDAPSGTALAMGEAIADALGRDLKSCAVYAREGHTGERDPKSIGFATVRAGDIVGEHTAMFADIGERVEITHKASSRMTFANGAVRAAIWISSKENGLFDMRDVLSLDDL</sequence>
<organism>
    <name type="scientific">Pectobacterium carotovorum subsp. carotovorum (strain PC1)</name>
    <dbReference type="NCBI Taxonomy" id="561230"/>
    <lineage>
        <taxon>Bacteria</taxon>
        <taxon>Pseudomonadati</taxon>
        <taxon>Pseudomonadota</taxon>
        <taxon>Gammaproteobacteria</taxon>
        <taxon>Enterobacterales</taxon>
        <taxon>Pectobacteriaceae</taxon>
        <taxon>Pectobacterium</taxon>
    </lineage>
</organism>
<protein>
    <recommendedName>
        <fullName evidence="1">4-hydroxy-tetrahydrodipicolinate reductase</fullName>
        <shortName evidence="1">HTPA reductase</shortName>
        <ecNumber evidence="1">1.17.1.8</ecNumber>
    </recommendedName>
</protein>
<reference key="1">
    <citation type="submission" date="2009-07" db="EMBL/GenBank/DDBJ databases">
        <title>Complete sequence of Pectobacterium carotovorum subsp. carotovorum PC1.</title>
        <authorList>
            <consortium name="US DOE Joint Genome Institute"/>
            <person name="Lucas S."/>
            <person name="Copeland A."/>
            <person name="Lapidus A."/>
            <person name="Glavina del Rio T."/>
            <person name="Tice H."/>
            <person name="Bruce D."/>
            <person name="Goodwin L."/>
            <person name="Pitluck S."/>
            <person name="Munk A.C."/>
            <person name="Brettin T."/>
            <person name="Detter J.C."/>
            <person name="Han C."/>
            <person name="Tapia R."/>
            <person name="Larimer F."/>
            <person name="Land M."/>
            <person name="Hauser L."/>
            <person name="Kyrpides N."/>
            <person name="Mikhailova N."/>
            <person name="Balakrishnan V."/>
            <person name="Glasner J."/>
            <person name="Perna N.T."/>
        </authorList>
    </citation>
    <scope>NUCLEOTIDE SEQUENCE [LARGE SCALE GENOMIC DNA]</scope>
    <source>
        <strain>PC1</strain>
    </source>
</reference>
<proteinExistence type="inferred from homology"/>
<keyword id="KW-0028">Amino-acid biosynthesis</keyword>
<keyword id="KW-0963">Cytoplasm</keyword>
<keyword id="KW-0220">Diaminopimelate biosynthesis</keyword>
<keyword id="KW-0457">Lysine biosynthesis</keyword>
<keyword id="KW-0520">NAD</keyword>
<keyword id="KW-0521">NADP</keyword>
<keyword id="KW-0560">Oxidoreductase</keyword>
<evidence type="ECO:0000255" key="1">
    <source>
        <dbReference type="HAMAP-Rule" id="MF_00102"/>
    </source>
</evidence>
<evidence type="ECO:0000305" key="2"/>
<name>DAPB_PECCP</name>
<gene>
    <name evidence="1" type="primary">dapB</name>
    <name type="ordered locus">PC1_3649</name>
</gene>